<name>TRXH_ORYSI</name>
<sequence>MAAEEGVVIACHNKDEFDAQMTKAKEAGKVVIIDFTASWCGPCRFIAPVFAEYAKKFPGAVFLKVDVDELKEVAEKYNVEAMPTFLFIKDGAEADKVVGARKDDLQNTIVKHVGATAASASA</sequence>
<reference key="1">
    <citation type="submission" date="1997-04" db="EMBL/GenBank/DDBJ databases">
        <title>Isolation and characterization of thioredoxin h gene from rice.</title>
        <authorList>
            <person name="Lee M.C."/>
            <person name="Eun M.Y."/>
            <person name="Lee G.R."/>
        </authorList>
    </citation>
    <scope>NUCLEOTIDE SEQUENCE [MRNA]</scope>
    <source>
        <strain>cv. Milyang 23</strain>
        <tissue>Seed</tissue>
    </source>
</reference>
<reference key="2">
    <citation type="journal article" date="2005" name="PLoS Biol.">
        <title>The genomes of Oryza sativa: a history of duplications.</title>
        <authorList>
            <person name="Yu J."/>
            <person name="Wang J."/>
            <person name="Lin W."/>
            <person name="Li S."/>
            <person name="Li H."/>
            <person name="Zhou J."/>
            <person name="Ni P."/>
            <person name="Dong W."/>
            <person name="Hu S."/>
            <person name="Zeng C."/>
            <person name="Zhang J."/>
            <person name="Zhang Y."/>
            <person name="Li R."/>
            <person name="Xu Z."/>
            <person name="Li S."/>
            <person name="Li X."/>
            <person name="Zheng H."/>
            <person name="Cong L."/>
            <person name="Lin L."/>
            <person name="Yin J."/>
            <person name="Geng J."/>
            <person name="Li G."/>
            <person name="Shi J."/>
            <person name="Liu J."/>
            <person name="Lv H."/>
            <person name="Li J."/>
            <person name="Wang J."/>
            <person name="Deng Y."/>
            <person name="Ran L."/>
            <person name="Shi X."/>
            <person name="Wang X."/>
            <person name="Wu Q."/>
            <person name="Li C."/>
            <person name="Ren X."/>
            <person name="Wang J."/>
            <person name="Wang X."/>
            <person name="Li D."/>
            <person name="Liu D."/>
            <person name="Zhang X."/>
            <person name="Ji Z."/>
            <person name="Zhao W."/>
            <person name="Sun Y."/>
            <person name="Zhang Z."/>
            <person name="Bao J."/>
            <person name="Han Y."/>
            <person name="Dong L."/>
            <person name="Ji J."/>
            <person name="Chen P."/>
            <person name="Wu S."/>
            <person name="Liu J."/>
            <person name="Xiao Y."/>
            <person name="Bu D."/>
            <person name="Tan J."/>
            <person name="Yang L."/>
            <person name="Ye C."/>
            <person name="Zhang J."/>
            <person name="Xu J."/>
            <person name="Zhou Y."/>
            <person name="Yu Y."/>
            <person name="Zhang B."/>
            <person name="Zhuang S."/>
            <person name="Wei H."/>
            <person name="Liu B."/>
            <person name="Lei M."/>
            <person name="Yu H."/>
            <person name="Li Y."/>
            <person name="Xu H."/>
            <person name="Wei S."/>
            <person name="He X."/>
            <person name="Fang L."/>
            <person name="Zhang Z."/>
            <person name="Zhang Y."/>
            <person name="Huang X."/>
            <person name="Su Z."/>
            <person name="Tong W."/>
            <person name="Li J."/>
            <person name="Tong Z."/>
            <person name="Li S."/>
            <person name="Ye J."/>
            <person name="Wang L."/>
            <person name="Fang L."/>
            <person name="Lei T."/>
            <person name="Chen C.-S."/>
            <person name="Chen H.-C."/>
            <person name="Xu Z."/>
            <person name="Li H."/>
            <person name="Huang H."/>
            <person name="Zhang F."/>
            <person name="Xu H."/>
            <person name="Li N."/>
            <person name="Zhao C."/>
            <person name="Li S."/>
            <person name="Dong L."/>
            <person name="Huang Y."/>
            <person name="Li L."/>
            <person name="Xi Y."/>
            <person name="Qi Q."/>
            <person name="Li W."/>
            <person name="Zhang B."/>
            <person name="Hu W."/>
            <person name="Zhang Y."/>
            <person name="Tian X."/>
            <person name="Jiao Y."/>
            <person name="Liang X."/>
            <person name="Jin J."/>
            <person name="Gao L."/>
            <person name="Zheng W."/>
            <person name="Hao B."/>
            <person name="Liu S.-M."/>
            <person name="Wang W."/>
            <person name="Yuan L."/>
            <person name="Cao M."/>
            <person name="McDermott J."/>
            <person name="Samudrala R."/>
            <person name="Wang J."/>
            <person name="Wong G.K.-S."/>
            <person name="Yang H."/>
        </authorList>
    </citation>
    <scope>NUCLEOTIDE SEQUENCE [LARGE SCALE GENOMIC DNA]</scope>
    <source>
        <strain>cv. 93-11</strain>
    </source>
</reference>
<reference key="3">
    <citation type="journal article" date="2009" name="Proteome Sci.">
        <title>Understanding the molecular basis of plant growth promotional effect of Pseudomonas fluorescens on rice through protein profiling.</title>
        <authorList>
            <person name="Kandasamy S."/>
            <person name="Loganathan K."/>
            <person name="Muthuraj R."/>
            <person name="Duraisamy S."/>
            <person name="Seetharaman S."/>
            <person name="Thiruvengadam R."/>
            <person name="Ponnusamy B."/>
            <person name="Ramasamy S."/>
        </authorList>
    </citation>
    <scope>IDENTIFICATION BY MASS SPECTROMETRY</scope>
    <scope>INDUCTION</scope>
    <source>
        <strain>cv. CO43</strain>
        <tissue>Leaf</tissue>
    </source>
</reference>
<proteinExistence type="evidence at protein level"/>
<dbReference type="EMBL" id="U92541">
    <property type="protein sequence ID" value="AAB51522.1"/>
    <property type="molecule type" value="mRNA"/>
</dbReference>
<dbReference type="EMBL" id="CM000132">
    <property type="protein sequence ID" value="EAZ03028.1"/>
    <property type="molecule type" value="Genomic_DNA"/>
</dbReference>
<dbReference type="SMR" id="A2YIW7"/>
<dbReference type="STRING" id="39946.A2YIW7"/>
<dbReference type="EnsemblPlants" id="BGIOSGA024701-TA">
    <property type="protein sequence ID" value="BGIOSGA024701-PA"/>
    <property type="gene ID" value="BGIOSGA024701"/>
</dbReference>
<dbReference type="EnsemblPlants" id="OsGoSa_07g0005420.01">
    <property type="protein sequence ID" value="OsGoSa_07g0005420.01"/>
    <property type="gene ID" value="OsGoSa_07g0005420"/>
</dbReference>
<dbReference type="EnsemblPlants" id="OsIR64_07g0005930.01">
    <property type="protein sequence ID" value="OsIR64_07g0005930.01"/>
    <property type="gene ID" value="OsIR64_07g0005930"/>
</dbReference>
<dbReference type="EnsemblPlants" id="OsKYG_07g0005380.01">
    <property type="protein sequence ID" value="OsKYG_07g0005380.01"/>
    <property type="gene ID" value="OsKYG_07g0005380"/>
</dbReference>
<dbReference type="EnsemblPlants" id="OsLaMu_07g0005360.01">
    <property type="protein sequence ID" value="OsLaMu_07g0005360.01"/>
    <property type="gene ID" value="OsLaMu_07g0005360"/>
</dbReference>
<dbReference type="EnsemblPlants" id="OsLima_07g0005380.01">
    <property type="protein sequence ID" value="OsLima_07g0005380.01"/>
    <property type="gene ID" value="OsLima_07g0005380"/>
</dbReference>
<dbReference type="EnsemblPlants" id="OsLiXu_Ung0038890.01">
    <property type="protein sequence ID" value="OsLiXu_Ung0038890.01"/>
    <property type="gene ID" value="OsLiXu_Ung0038890"/>
</dbReference>
<dbReference type="EnsemblPlants" id="OsMH63_07G005340_02">
    <property type="protein sequence ID" value="OsMH63_07G005340_02"/>
    <property type="gene ID" value="OsMH63_07G005340"/>
</dbReference>
<dbReference type="EnsemblPlants" id="OsPr106_07g0005400.03">
    <property type="protein sequence ID" value="OsPr106_07g0005400.03"/>
    <property type="gene ID" value="OsPr106_07g0005400"/>
</dbReference>
<dbReference type="EnsemblPlants" id="OsZS97_07G005390_02">
    <property type="protein sequence ID" value="OsZS97_07G005390_02"/>
    <property type="gene ID" value="OsZS97_07G005390"/>
</dbReference>
<dbReference type="Gramene" id="BGIOSGA024701-TA">
    <property type="protein sequence ID" value="BGIOSGA024701-PA"/>
    <property type="gene ID" value="BGIOSGA024701"/>
</dbReference>
<dbReference type="Gramene" id="OsGoSa_07g0005420.01">
    <property type="protein sequence ID" value="OsGoSa_07g0005420.01"/>
    <property type="gene ID" value="OsGoSa_07g0005420"/>
</dbReference>
<dbReference type="Gramene" id="OsIR64_07g0005930.01">
    <property type="protein sequence ID" value="OsIR64_07g0005930.01"/>
    <property type="gene ID" value="OsIR64_07g0005930"/>
</dbReference>
<dbReference type="Gramene" id="OsKYG_07g0005380.01">
    <property type="protein sequence ID" value="OsKYG_07g0005380.01"/>
    <property type="gene ID" value="OsKYG_07g0005380"/>
</dbReference>
<dbReference type="Gramene" id="OsLaMu_07g0005360.01">
    <property type="protein sequence ID" value="OsLaMu_07g0005360.01"/>
    <property type="gene ID" value="OsLaMu_07g0005360"/>
</dbReference>
<dbReference type="Gramene" id="OsLima_07g0005380.01">
    <property type="protein sequence ID" value="OsLima_07g0005380.01"/>
    <property type="gene ID" value="OsLima_07g0005380"/>
</dbReference>
<dbReference type="Gramene" id="OsLiXu_Ung0038890.01">
    <property type="protein sequence ID" value="OsLiXu_Ung0038890.01"/>
    <property type="gene ID" value="OsLiXu_Ung0038890"/>
</dbReference>
<dbReference type="Gramene" id="OsMH63_07G005340_02">
    <property type="protein sequence ID" value="OsMH63_07G005340_02"/>
    <property type="gene ID" value="OsMH63_07G005340"/>
</dbReference>
<dbReference type="Gramene" id="OsPr106_07g0005400.03">
    <property type="protein sequence ID" value="OsPr106_07g0005400.03"/>
    <property type="gene ID" value="OsPr106_07g0005400"/>
</dbReference>
<dbReference type="Gramene" id="OsZS97_07G005390_02">
    <property type="protein sequence ID" value="OsZS97_07G005390_02"/>
    <property type="gene ID" value="OsZS97_07G005390"/>
</dbReference>
<dbReference type="HOGENOM" id="CLU_090389_14_1_1"/>
<dbReference type="OMA" id="CYADWCS"/>
<dbReference type="OrthoDB" id="10263751at2759"/>
<dbReference type="Proteomes" id="UP000007015">
    <property type="component" value="Chromosome 7"/>
</dbReference>
<dbReference type="GO" id="GO:0005737">
    <property type="term" value="C:cytoplasm"/>
    <property type="evidence" value="ECO:0007669"/>
    <property type="project" value="UniProtKB-SubCell"/>
</dbReference>
<dbReference type="GO" id="GO:0004857">
    <property type="term" value="F:enzyme inhibitor activity"/>
    <property type="evidence" value="ECO:0007669"/>
    <property type="project" value="EnsemblPlants"/>
</dbReference>
<dbReference type="GO" id="GO:0016671">
    <property type="term" value="F:oxidoreductase activity, acting on a sulfur group of donors, disulfide as acceptor"/>
    <property type="evidence" value="ECO:0007669"/>
    <property type="project" value="EnsemblPlants"/>
</dbReference>
<dbReference type="GO" id="GO:0015035">
    <property type="term" value="F:protein-disulfide reductase activity"/>
    <property type="evidence" value="ECO:0007669"/>
    <property type="project" value="InterPro"/>
</dbReference>
<dbReference type="GO" id="GO:0010497">
    <property type="term" value="P:plasmodesmata-mediated intercellular transport"/>
    <property type="evidence" value="ECO:0007669"/>
    <property type="project" value="EnsemblPlants"/>
</dbReference>
<dbReference type="GO" id="GO:0009409">
    <property type="term" value="P:response to cold"/>
    <property type="evidence" value="ECO:0007669"/>
    <property type="project" value="EnsemblPlants"/>
</dbReference>
<dbReference type="GO" id="GO:0006979">
    <property type="term" value="P:response to oxidative stress"/>
    <property type="evidence" value="ECO:0007669"/>
    <property type="project" value="EnsemblPlants"/>
</dbReference>
<dbReference type="CDD" id="cd02947">
    <property type="entry name" value="TRX_family"/>
    <property type="match status" value="1"/>
</dbReference>
<dbReference type="FunFam" id="3.40.30.10:FF:000104">
    <property type="entry name" value="Thioredoxin"/>
    <property type="match status" value="1"/>
</dbReference>
<dbReference type="Gene3D" id="3.40.30.10">
    <property type="entry name" value="Glutaredoxin"/>
    <property type="match status" value="1"/>
</dbReference>
<dbReference type="InterPro" id="IPR005746">
    <property type="entry name" value="Thioredoxin"/>
</dbReference>
<dbReference type="InterPro" id="IPR036249">
    <property type="entry name" value="Thioredoxin-like_sf"/>
</dbReference>
<dbReference type="InterPro" id="IPR017937">
    <property type="entry name" value="Thioredoxin_CS"/>
</dbReference>
<dbReference type="InterPro" id="IPR013766">
    <property type="entry name" value="Thioredoxin_domain"/>
</dbReference>
<dbReference type="InterPro" id="IPR050620">
    <property type="entry name" value="Thioredoxin_H-type-like"/>
</dbReference>
<dbReference type="PANTHER" id="PTHR10438">
    <property type="entry name" value="THIOREDOXIN"/>
    <property type="match status" value="1"/>
</dbReference>
<dbReference type="PANTHER" id="PTHR10438:SF453">
    <property type="entry name" value="THIOREDOXIN H4-RELATED"/>
    <property type="match status" value="1"/>
</dbReference>
<dbReference type="Pfam" id="PF00085">
    <property type="entry name" value="Thioredoxin"/>
    <property type="match status" value="1"/>
</dbReference>
<dbReference type="PIRSF" id="PIRSF000077">
    <property type="entry name" value="Thioredoxin"/>
    <property type="match status" value="1"/>
</dbReference>
<dbReference type="PRINTS" id="PR00421">
    <property type="entry name" value="THIOREDOXIN"/>
</dbReference>
<dbReference type="SUPFAM" id="SSF52833">
    <property type="entry name" value="Thioredoxin-like"/>
    <property type="match status" value="1"/>
</dbReference>
<dbReference type="PROSITE" id="PS00194">
    <property type="entry name" value="THIOREDOXIN_1"/>
    <property type="match status" value="1"/>
</dbReference>
<dbReference type="PROSITE" id="PS51352">
    <property type="entry name" value="THIOREDOXIN_2"/>
    <property type="match status" value="1"/>
</dbReference>
<gene>
    <name type="primary">TRXH</name>
    <name type="ORF">OsI_024260</name>
</gene>
<accession>A2YIW7</accession>
<accession>O04743</accession>
<accession>Q42443</accession>
<accession>Q7EZX7</accession>
<comment type="function">
    <text evidence="1">Participates in various redox reactions through the reversible oxidation of the active center dithiol to a disulfide. The H form is known to activate a number of cytosolic enzymes (By similarity).</text>
</comment>
<comment type="subcellular location">
    <subcellularLocation>
        <location evidence="1">Cytoplasm</location>
    </subcellularLocation>
</comment>
<comment type="induction">
    <text evidence="3">Up-regulated in the leaf sheaths of rice plants grown from seeds that were inoculated with the nonpathogenic P.fluorescens strain KH-1.</text>
</comment>
<comment type="mass spectrometry"/>
<comment type="similarity">
    <text evidence="4">Belongs to the thioredoxin family. Plant H-type subfamily.</text>
</comment>
<protein>
    <recommendedName>
        <fullName>Thioredoxin H-type</fullName>
        <shortName>Trx-H</shortName>
    </recommendedName>
    <alternativeName>
        <fullName>Phloem sap 13 kDa protein 1</fullName>
    </alternativeName>
</protein>
<feature type="chain" id="PRO_0000303666" description="Thioredoxin H-type">
    <location>
        <begin position="1"/>
        <end position="122"/>
    </location>
</feature>
<feature type="domain" description="Thioredoxin" evidence="2">
    <location>
        <begin position="2"/>
        <end position="118"/>
    </location>
</feature>
<feature type="disulfide bond" description="Redox-active" evidence="2">
    <location>
        <begin position="40"/>
        <end position="43"/>
    </location>
</feature>
<evidence type="ECO:0000250" key="1"/>
<evidence type="ECO:0000255" key="2">
    <source>
        <dbReference type="PROSITE-ProRule" id="PRU00691"/>
    </source>
</evidence>
<evidence type="ECO:0000269" key="3">
    <source>
    </source>
</evidence>
<evidence type="ECO:0000305" key="4"/>
<organism>
    <name type="scientific">Oryza sativa subsp. indica</name>
    <name type="common">Rice</name>
    <dbReference type="NCBI Taxonomy" id="39946"/>
    <lineage>
        <taxon>Eukaryota</taxon>
        <taxon>Viridiplantae</taxon>
        <taxon>Streptophyta</taxon>
        <taxon>Embryophyta</taxon>
        <taxon>Tracheophyta</taxon>
        <taxon>Spermatophyta</taxon>
        <taxon>Magnoliopsida</taxon>
        <taxon>Liliopsida</taxon>
        <taxon>Poales</taxon>
        <taxon>Poaceae</taxon>
        <taxon>BOP clade</taxon>
        <taxon>Oryzoideae</taxon>
        <taxon>Oryzeae</taxon>
        <taxon>Oryzinae</taxon>
        <taxon>Oryza</taxon>
        <taxon>Oryza sativa</taxon>
    </lineage>
</organism>
<keyword id="KW-0963">Cytoplasm</keyword>
<keyword id="KW-1015">Disulfide bond</keyword>
<keyword id="KW-0249">Electron transport</keyword>
<keyword id="KW-0676">Redox-active center</keyword>
<keyword id="KW-1185">Reference proteome</keyword>
<keyword id="KW-0813">Transport</keyword>